<feature type="chain" id="PRO_0000108483" description="Transcriptional regulator MraZ">
    <location>
        <begin position="1"/>
        <end position="143"/>
    </location>
</feature>
<feature type="domain" description="SpoVT-AbrB 1" evidence="2">
    <location>
        <begin position="5"/>
        <end position="47"/>
    </location>
</feature>
<feature type="domain" description="SpoVT-AbrB 2" evidence="2">
    <location>
        <begin position="76"/>
        <end position="119"/>
    </location>
</feature>
<dbReference type="EMBL" id="Y13922">
    <property type="protein sequence ID" value="CAA74238.1"/>
    <property type="status" value="ALT_INIT"/>
    <property type="molecule type" value="Genomic_DNA"/>
</dbReference>
<dbReference type="RefSeq" id="WP_014834189.1">
    <property type="nucleotide sequence ID" value="NZ_WXSJ01000005.1"/>
</dbReference>
<dbReference type="SMR" id="O34913"/>
<dbReference type="STRING" id="1354.A6P53_03375"/>
<dbReference type="GeneID" id="56788114"/>
<dbReference type="GO" id="GO:0005737">
    <property type="term" value="C:cytoplasm"/>
    <property type="evidence" value="ECO:0007669"/>
    <property type="project" value="UniProtKB-UniRule"/>
</dbReference>
<dbReference type="GO" id="GO:0009295">
    <property type="term" value="C:nucleoid"/>
    <property type="evidence" value="ECO:0007669"/>
    <property type="project" value="UniProtKB-SubCell"/>
</dbReference>
<dbReference type="GO" id="GO:0003700">
    <property type="term" value="F:DNA-binding transcription factor activity"/>
    <property type="evidence" value="ECO:0007669"/>
    <property type="project" value="UniProtKB-UniRule"/>
</dbReference>
<dbReference type="GO" id="GO:0000976">
    <property type="term" value="F:transcription cis-regulatory region binding"/>
    <property type="evidence" value="ECO:0007669"/>
    <property type="project" value="TreeGrafter"/>
</dbReference>
<dbReference type="GO" id="GO:2000143">
    <property type="term" value="P:negative regulation of DNA-templated transcription initiation"/>
    <property type="evidence" value="ECO:0007669"/>
    <property type="project" value="TreeGrafter"/>
</dbReference>
<dbReference type="CDD" id="cd16321">
    <property type="entry name" value="MraZ_C"/>
    <property type="match status" value="1"/>
</dbReference>
<dbReference type="CDD" id="cd16320">
    <property type="entry name" value="MraZ_N"/>
    <property type="match status" value="1"/>
</dbReference>
<dbReference type="FunFam" id="3.40.1550.20:FF:000002">
    <property type="entry name" value="Transcriptional regulator MraZ"/>
    <property type="match status" value="1"/>
</dbReference>
<dbReference type="Gene3D" id="3.40.1550.20">
    <property type="entry name" value="Transcriptional regulator MraZ domain"/>
    <property type="match status" value="1"/>
</dbReference>
<dbReference type="HAMAP" id="MF_01008">
    <property type="entry name" value="MraZ"/>
    <property type="match status" value="1"/>
</dbReference>
<dbReference type="InterPro" id="IPR003444">
    <property type="entry name" value="MraZ"/>
</dbReference>
<dbReference type="InterPro" id="IPR035644">
    <property type="entry name" value="MraZ_C"/>
</dbReference>
<dbReference type="InterPro" id="IPR020603">
    <property type="entry name" value="MraZ_dom"/>
</dbReference>
<dbReference type="InterPro" id="IPR035642">
    <property type="entry name" value="MraZ_N"/>
</dbReference>
<dbReference type="InterPro" id="IPR038619">
    <property type="entry name" value="MraZ_sf"/>
</dbReference>
<dbReference type="InterPro" id="IPR007159">
    <property type="entry name" value="SpoVT-AbrB_dom"/>
</dbReference>
<dbReference type="InterPro" id="IPR037914">
    <property type="entry name" value="SpoVT-AbrB_sf"/>
</dbReference>
<dbReference type="NCBIfam" id="TIGR00242">
    <property type="entry name" value="division/cell wall cluster transcriptional repressor MraZ"/>
    <property type="match status" value="1"/>
</dbReference>
<dbReference type="PANTHER" id="PTHR34701">
    <property type="entry name" value="TRANSCRIPTIONAL REGULATOR MRAZ"/>
    <property type="match status" value="1"/>
</dbReference>
<dbReference type="PANTHER" id="PTHR34701:SF1">
    <property type="entry name" value="TRANSCRIPTIONAL REGULATOR MRAZ"/>
    <property type="match status" value="1"/>
</dbReference>
<dbReference type="Pfam" id="PF02381">
    <property type="entry name" value="MraZ"/>
    <property type="match status" value="2"/>
</dbReference>
<dbReference type="SUPFAM" id="SSF89447">
    <property type="entry name" value="AbrB/MazE/MraZ-like"/>
    <property type="match status" value="1"/>
</dbReference>
<dbReference type="PROSITE" id="PS51740">
    <property type="entry name" value="SPOVT_ABRB"/>
    <property type="match status" value="2"/>
</dbReference>
<protein>
    <recommendedName>
        <fullName>Transcriptional regulator MraZ</fullName>
    </recommendedName>
</protein>
<keyword id="KW-0963">Cytoplasm</keyword>
<keyword id="KW-0238">DNA-binding</keyword>
<keyword id="KW-0677">Repeat</keyword>
<keyword id="KW-0804">Transcription</keyword>
<keyword id="KW-0805">Transcription regulation</keyword>
<proteinExistence type="inferred from homology"/>
<reference key="1">
    <citation type="journal article" date="1998" name="DNA Seq.">
        <title>The division and cell wall gene cluster of Enterococcus hirae S185.</title>
        <authorList>
            <person name="Duez C."/>
            <person name="Thamm I."/>
            <person name="Sapunaric F."/>
            <person name="Coyette J."/>
            <person name="Ghuysen J.-M."/>
        </authorList>
    </citation>
    <scope>NUCLEOTIDE SEQUENCE [GENOMIC DNA]</scope>
    <source>
        <strain>S185</strain>
    </source>
</reference>
<organism>
    <name type="scientific">Enterococcus hirae</name>
    <dbReference type="NCBI Taxonomy" id="1354"/>
    <lineage>
        <taxon>Bacteria</taxon>
        <taxon>Bacillati</taxon>
        <taxon>Bacillota</taxon>
        <taxon>Bacilli</taxon>
        <taxon>Lactobacillales</taxon>
        <taxon>Enterococcaceae</taxon>
        <taxon>Enterococcus</taxon>
    </lineage>
</organism>
<accession>O34913</accession>
<sequence>MFMGEFRHNIDTKGRMIVPSKLREELGEQFVLTRGLDGCLFGYPMKEWANLETKLNDMPLAKKDARTFVRFFYSAATECELDKQGRINIPSTLRNYAALTKECVVIGVSNRIEIWDEARWQEFSEVAAENFDEIAENMIDFGL</sequence>
<comment type="subunit">
    <text evidence="1">Forms oligomers.</text>
</comment>
<comment type="subcellular location">
    <subcellularLocation>
        <location evidence="1">Cytoplasm</location>
        <location evidence="1">Nucleoid</location>
    </subcellularLocation>
</comment>
<comment type="similarity">
    <text evidence="1">Belongs to the MraZ family.</text>
</comment>
<comment type="sequence caution" evidence="3">
    <conflict type="erroneous initiation">
        <sequence resource="EMBL-CDS" id="CAA74238"/>
    </conflict>
</comment>
<name>MRAZ_ENTHR</name>
<evidence type="ECO:0000255" key="1">
    <source>
        <dbReference type="HAMAP-Rule" id="MF_01008"/>
    </source>
</evidence>
<evidence type="ECO:0000255" key="2">
    <source>
        <dbReference type="PROSITE-ProRule" id="PRU01076"/>
    </source>
</evidence>
<evidence type="ECO:0000305" key="3"/>
<gene>
    <name evidence="1" type="primary">mraZ</name>
</gene>